<accession>Q04ML0</accession>
<sequence length="128" mass="14506">MAYRKLGRTSSQRKAMLRDLTTDLLINESIVTTEARAKEIRKTVEKMITLGKRGDLHARRQAAAFVRNEIASENYDEATDKYTSTTALQKLFSEIAPRYAERNGGYTRILKTEPRRGDAAPMAIIELV</sequence>
<organism>
    <name type="scientific">Streptococcus pneumoniae serotype 2 (strain D39 / NCTC 7466)</name>
    <dbReference type="NCBI Taxonomy" id="373153"/>
    <lineage>
        <taxon>Bacteria</taxon>
        <taxon>Bacillati</taxon>
        <taxon>Bacillota</taxon>
        <taxon>Bacilli</taxon>
        <taxon>Lactobacillales</taxon>
        <taxon>Streptococcaceae</taxon>
        <taxon>Streptococcus</taxon>
    </lineage>
</organism>
<protein>
    <recommendedName>
        <fullName evidence="1">Large ribosomal subunit protein bL17</fullName>
    </recommendedName>
    <alternativeName>
        <fullName evidence="2">50S ribosomal protein L17</fullName>
    </alternativeName>
</protein>
<gene>
    <name evidence="1" type="primary">rplQ</name>
    <name type="ordered locus">SPD_0219</name>
</gene>
<name>RL17_STRP2</name>
<evidence type="ECO:0000255" key="1">
    <source>
        <dbReference type="HAMAP-Rule" id="MF_01368"/>
    </source>
</evidence>
<evidence type="ECO:0000305" key="2"/>
<keyword id="KW-1185">Reference proteome</keyword>
<keyword id="KW-0687">Ribonucleoprotein</keyword>
<keyword id="KW-0689">Ribosomal protein</keyword>
<reference key="1">
    <citation type="journal article" date="2007" name="J. Bacteriol.">
        <title>Genome sequence of Avery's virulent serotype 2 strain D39 of Streptococcus pneumoniae and comparison with that of unencapsulated laboratory strain R6.</title>
        <authorList>
            <person name="Lanie J.A."/>
            <person name="Ng W.-L."/>
            <person name="Kazmierczak K.M."/>
            <person name="Andrzejewski T.M."/>
            <person name="Davidsen T.M."/>
            <person name="Wayne K.J."/>
            <person name="Tettelin H."/>
            <person name="Glass J.I."/>
            <person name="Winkler M.E."/>
        </authorList>
    </citation>
    <scope>NUCLEOTIDE SEQUENCE [LARGE SCALE GENOMIC DNA]</scope>
    <source>
        <strain>D39 / NCTC 7466</strain>
    </source>
</reference>
<comment type="subunit">
    <text evidence="1">Part of the 50S ribosomal subunit. Contacts protein L32.</text>
</comment>
<comment type="similarity">
    <text evidence="1">Belongs to the bacterial ribosomal protein bL17 family.</text>
</comment>
<feature type="chain" id="PRO_1000055957" description="Large ribosomal subunit protein bL17">
    <location>
        <begin position="1"/>
        <end position="128"/>
    </location>
</feature>
<proteinExistence type="inferred from homology"/>
<dbReference type="EMBL" id="CP000410">
    <property type="protein sequence ID" value="ABJ53743.1"/>
    <property type="molecule type" value="Genomic_DNA"/>
</dbReference>
<dbReference type="RefSeq" id="WP_000331493.1">
    <property type="nucleotide sequence ID" value="NZ_JAMLJR010000002.1"/>
</dbReference>
<dbReference type="SMR" id="Q04ML0"/>
<dbReference type="PaxDb" id="373153-SPD_0219"/>
<dbReference type="GeneID" id="93738984"/>
<dbReference type="KEGG" id="spd:SPD_0219"/>
<dbReference type="eggNOG" id="COG0203">
    <property type="taxonomic scope" value="Bacteria"/>
</dbReference>
<dbReference type="HOGENOM" id="CLU_074407_2_2_9"/>
<dbReference type="BioCyc" id="SPNE373153:G1G6V-243-MONOMER"/>
<dbReference type="Proteomes" id="UP000001452">
    <property type="component" value="Chromosome"/>
</dbReference>
<dbReference type="GO" id="GO:0022625">
    <property type="term" value="C:cytosolic large ribosomal subunit"/>
    <property type="evidence" value="ECO:0007669"/>
    <property type="project" value="TreeGrafter"/>
</dbReference>
<dbReference type="GO" id="GO:0003735">
    <property type="term" value="F:structural constituent of ribosome"/>
    <property type="evidence" value="ECO:0007669"/>
    <property type="project" value="InterPro"/>
</dbReference>
<dbReference type="GO" id="GO:0006412">
    <property type="term" value="P:translation"/>
    <property type="evidence" value="ECO:0007669"/>
    <property type="project" value="UniProtKB-UniRule"/>
</dbReference>
<dbReference type="FunFam" id="3.90.1030.10:FF:000002">
    <property type="entry name" value="50S ribosomal protein L17"/>
    <property type="match status" value="1"/>
</dbReference>
<dbReference type="Gene3D" id="3.90.1030.10">
    <property type="entry name" value="Ribosomal protein L17"/>
    <property type="match status" value="1"/>
</dbReference>
<dbReference type="HAMAP" id="MF_01368">
    <property type="entry name" value="Ribosomal_bL17"/>
    <property type="match status" value="1"/>
</dbReference>
<dbReference type="InterPro" id="IPR000456">
    <property type="entry name" value="Ribosomal_bL17"/>
</dbReference>
<dbReference type="InterPro" id="IPR047859">
    <property type="entry name" value="Ribosomal_bL17_CS"/>
</dbReference>
<dbReference type="InterPro" id="IPR036373">
    <property type="entry name" value="Ribosomal_bL17_sf"/>
</dbReference>
<dbReference type="NCBIfam" id="TIGR00059">
    <property type="entry name" value="L17"/>
    <property type="match status" value="1"/>
</dbReference>
<dbReference type="PANTHER" id="PTHR14413:SF16">
    <property type="entry name" value="LARGE RIBOSOMAL SUBUNIT PROTEIN BL17M"/>
    <property type="match status" value="1"/>
</dbReference>
<dbReference type="PANTHER" id="PTHR14413">
    <property type="entry name" value="RIBOSOMAL PROTEIN L17"/>
    <property type="match status" value="1"/>
</dbReference>
<dbReference type="Pfam" id="PF01196">
    <property type="entry name" value="Ribosomal_L17"/>
    <property type="match status" value="1"/>
</dbReference>
<dbReference type="SUPFAM" id="SSF64263">
    <property type="entry name" value="Prokaryotic ribosomal protein L17"/>
    <property type="match status" value="1"/>
</dbReference>
<dbReference type="PROSITE" id="PS01167">
    <property type="entry name" value="RIBOSOMAL_L17"/>
    <property type="match status" value="1"/>
</dbReference>